<evidence type="ECO:0000255" key="1">
    <source>
        <dbReference type="HAMAP-Rule" id="MF_00537"/>
    </source>
</evidence>
<evidence type="ECO:0000305" key="2"/>
<proteinExistence type="inferred from homology"/>
<dbReference type="EMBL" id="CP000970">
    <property type="protein sequence ID" value="ACB17789.1"/>
    <property type="molecule type" value="Genomic_DNA"/>
</dbReference>
<dbReference type="RefSeq" id="WP_001118930.1">
    <property type="nucleotide sequence ID" value="NC_010498.1"/>
</dbReference>
<dbReference type="SMR" id="B1LHC1"/>
<dbReference type="GeneID" id="93778680"/>
<dbReference type="KEGG" id="ecm:EcSMS35_3602"/>
<dbReference type="HOGENOM" id="CLU_139869_0_1_6"/>
<dbReference type="Proteomes" id="UP000007011">
    <property type="component" value="Chromosome"/>
</dbReference>
<dbReference type="GO" id="GO:0005737">
    <property type="term" value="C:cytoplasm"/>
    <property type="evidence" value="ECO:0007669"/>
    <property type="project" value="UniProtKB-ARBA"/>
</dbReference>
<dbReference type="GO" id="GO:0015935">
    <property type="term" value="C:small ribosomal subunit"/>
    <property type="evidence" value="ECO:0007669"/>
    <property type="project" value="TreeGrafter"/>
</dbReference>
<dbReference type="GO" id="GO:0019843">
    <property type="term" value="F:rRNA binding"/>
    <property type="evidence" value="ECO:0007669"/>
    <property type="project" value="UniProtKB-UniRule"/>
</dbReference>
<dbReference type="GO" id="GO:0003735">
    <property type="term" value="F:structural constituent of ribosome"/>
    <property type="evidence" value="ECO:0007669"/>
    <property type="project" value="InterPro"/>
</dbReference>
<dbReference type="GO" id="GO:0006412">
    <property type="term" value="P:translation"/>
    <property type="evidence" value="ECO:0007669"/>
    <property type="project" value="UniProtKB-UniRule"/>
</dbReference>
<dbReference type="FunFam" id="1.10.287.1480:FF:000001">
    <property type="entry name" value="30S ribosomal protein S14"/>
    <property type="match status" value="1"/>
</dbReference>
<dbReference type="Gene3D" id="1.10.287.1480">
    <property type="match status" value="1"/>
</dbReference>
<dbReference type="HAMAP" id="MF_00537">
    <property type="entry name" value="Ribosomal_uS14_1"/>
    <property type="match status" value="1"/>
</dbReference>
<dbReference type="InterPro" id="IPR001209">
    <property type="entry name" value="Ribosomal_uS14"/>
</dbReference>
<dbReference type="InterPro" id="IPR023036">
    <property type="entry name" value="Ribosomal_uS14_bac/plastid"/>
</dbReference>
<dbReference type="InterPro" id="IPR018271">
    <property type="entry name" value="Ribosomal_uS14_CS"/>
</dbReference>
<dbReference type="NCBIfam" id="NF006477">
    <property type="entry name" value="PRK08881.1"/>
    <property type="match status" value="1"/>
</dbReference>
<dbReference type="PANTHER" id="PTHR19836">
    <property type="entry name" value="30S RIBOSOMAL PROTEIN S14"/>
    <property type="match status" value="1"/>
</dbReference>
<dbReference type="PANTHER" id="PTHR19836:SF19">
    <property type="entry name" value="SMALL RIBOSOMAL SUBUNIT PROTEIN US14M"/>
    <property type="match status" value="1"/>
</dbReference>
<dbReference type="Pfam" id="PF00253">
    <property type="entry name" value="Ribosomal_S14"/>
    <property type="match status" value="1"/>
</dbReference>
<dbReference type="SUPFAM" id="SSF57716">
    <property type="entry name" value="Glucocorticoid receptor-like (DNA-binding domain)"/>
    <property type="match status" value="1"/>
</dbReference>
<dbReference type="PROSITE" id="PS00527">
    <property type="entry name" value="RIBOSOMAL_S14"/>
    <property type="match status" value="1"/>
</dbReference>
<reference key="1">
    <citation type="journal article" date="2008" name="J. Bacteriol.">
        <title>Insights into the environmental resistance gene pool from the genome sequence of the multidrug-resistant environmental isolate Escherichia coli SMS-3-5.</title>
        <authorList>
            <person name="Fricke W.F."/>
            <person name="Wright M.S."/>
            <person name="Lindell A.H."/>
            <person name="Harkins D.M."/>
            <person name="Baker-Austin C."/>
            <person name="Ravel J."/>
            <person name="Stepanauskas R."/>
        </authorList>
    </citation>
    <scope>NUCLEOTIDE SEQUENCE [LARGE SCALE GENOMIC DNA]</scope>
    <source>
        <strain>SMS-3-5 / SECEC</strain>
    </source>
</reference>
<feature type="chain" id="PRO_1000128393" description="Small ribosomal subunit protein uS14">
    <location>
        <begin position="1"/>
        <end position="101"/>
    </location>
</feature>
<keyword id="KW-0687">Ribonucleoprotein</keyword>
<keyword id="KW-0689">Ribosomal protein</keyword>
<keyword id="KW-0694">RNA-binding</keyword>
<keyword id="KW-0699">rRNA-binding</keyword>
<sequence length="101" mass="11580">MAKQSMKAREVKRVALADKYFAKRAELKAIISDVNASDEDRWNAVLKLQTLPRDSSPSRQRNRCRQTGRPHGFLRKFGLSRIKVREAAMRGEIPGLKKASW</sequence>
<protein>
    <recommendedName>
        <fullName evidence="1">Small ribosomal subunit protein uS14</fullName>
    </recommendedName>
    <alternativeName>
        <fullName evidence="2">30S ribosomal protein S14</fullName>
    </alternativeName>
</protein>
<accession>B1LHC1</accession>
<organism>
    <name type="scientific">Escherichia coli (strain SMS-3-5 / SECEC)</name>
    <dbReference type="NCBI Taxonomy" id="439855"/>
    <lineage>
        <taxon>Bacteria</taxon>
        <taxon>Pseudomonadati</taxon>
        <taxon>Pseudomonadota</taxon>
        <taxon>Gammaproteobacteria</taxon>
        <taxon>Enterobacterales</taxon>
        <taxon>Enterobacteriaceae</taxon>
        <taxon>Escherichia</taxon>
    </lineage>
</organism>
<comment type="function">
    <text evidence="1">Binds 16S rRNA, required for the assembly of 30S particles and may also be responsible for determining the conformation of the 16S rRNA at the A site.</text>
</comment>
<comment type="subunit">
    <text evidence="1">Part of the 30S ribosomal subunit. Contacts proteins S3 and S10.</text>
</comment>
<comment type="similarity">
    <text evidence="1">Belongs to the universal ribosomal protein uS14 family.</text>
</comment>
<name>RS14_ECOSM</name>
<gene>
    <name evidence="1" type="primary">rpsN</name>
    <name type="ordered locus">EcSMS35_3602</name>
</gene>